<protein>
    <recommendedName>
        <fullName evidence="1">Uroporphyrinogen decarboxylase</fullName>
        <shortName evidence="1">UPD</shortName>
        <shortName evidence="1">URO-D</shortName>
        <ecNumber evidence="1">4.1.1.37</ecNumber>
    </recommendedName>
</protein>
<gene>
    <name evidence="1" type="primary">hemE</name>
    <name type="ordered locus">PsycPRwf_1599</name>
</gene>
<organism>
    <name type="scientific">Psychrobacter sp. (strain PRwf-1)</name>
    <dbReference type="NCBI Taxonomy" id="349106"/>
    <lineage>
        <taxon>Bacteria</taxon>
        <taxon>Pseudomonadati</taxon>
        <taxon>Pseudomonadota</taxon>
        <taxon>Gammaproteobacteria</taxon>
        <taxon>Moraxellales</taxon>
        <taxon>Moraxellaceae</taxon>
        <taxon>Psychrobacter</taxon>
    </lineage>
</organism>
<evidence type="ECO:0000255" key="1">
    <source>
        <dbReference type="HAMAP-Rule" id="MF_00218"/>
    </source>
</evidence>
<feature type="chain" id="PRO_0000325678" description="Uroporphyrinogen decarboxylase">
    <location>
        <begin position="1"/>
        <end position="368"/>
    </location>
</feature>
<feature type="binding site" evidence="1">
    <location>
        <begin position="41"/>
        <end position="45"/>
    </location>
    <ligand>
        <name>substrate</name>
    </ligand>
</feature>
<feature type="binding site" evidence="1">
    <location>
        <position position="91"/>
    </location>
    <ligand>
        <name>substrate</name>
    </ligand>
</feature>
<feature type="binding site" evidence="1">
    <location>
        <position position="168"/>
    </location>
    <ligand>
        <name>substrate</name>
    </ligand>
</feature>
<feature type="binding site" evidence="1">
    <location>
        <position position="223"/>
    </location>
    <ligand>
        <name>substrate</name>
    </ligand>
</feature>
<feature type="binding site" evidence="1">
    <location>
        <position position="345"/>
    </location>
    <ligand>
        <name>substrate</name>
    </ligand>
</feature>
<feature type="site" description="Transition state stabilizer" evidence="1">
    <location>
        <position position="91"/>
    </location>
</feature>
<accession>A5WFU9</accession>
<reference key="1">
    <citation type="submission" date="2007-05" db="EMBL/GenBank/DDBJ databases">
        <title>Complete sequence of chromosome of Psychrobacter sp. PRwf-1.</title>
        <authorList>
            <consortium name="US DOE Joint Genome Institute"/>
            <person name="Copeland A."/>
            <person name="Lucas S."/>
            <person name="Lapidus A."/>
            <person name="Barry K."/>
            <person name="Detter J.C."/>
            <person name="Glavina del Rio T."/>
            <person name="Hammon N."/>
            <person name="Israni S."/>
            <person name="Dalin E."/>
            <person name="Tice H."/>
            <person name="Pitluck S."/>
            <person name="Chain P."/>
            <person name="Malfatti S."/>
            <person name="Shin M."/>
            <person name="Vergez L."/>
            <person name="Schmutz J."/>
            <person name="Larimer F."/>
            <person name="Land M."/>
            <person name="Hauser L."/>
            <person name="Kyrpides N."/>
            <person name="Kim E."/>
            <person name="Tiedje J."/>
            <person name="Richardson P."/>
        </authorList>
    </citation>
    <scope>NUCLEOTIDE SEQUENCE [LARGE SCALE GENOMIC DNA]</scope>
    <source>
        <strain>PRwf-1</strain>
    </source>
</reference>
<sequence length="368" mass="40981">MSIMNSDSVENTHNFAPLKNDRLLKALRFEPIDTTPVWMMRQAGRYLPEYKATRAEAGDFMSLCKDTARATEVTMQPLRRYELDAAILFSDILTIPDAMGLGLYFETGEGPKFKRTLRTEADFNQLEAFNAADSLSYVMDAVTSIRKELNGKVPLFGFSGSAWTLATYMIEGGSSKDYRYTKGLLYSKPEFLHQILDHITTAIIDYLDAQIVAGAQIVQLFDSWGGALAHRQFAEFSHKYNKRVVAELKQRHPEVPVVVFTKGGGLWLDVQMDSEADCLGLDWSMPLDKARAILATGKRKIAVQGNLDPATLYGSPELIRQSVNAMLDDAYAGGEKTGYIANLGHGITQWVDPKNAGVFVDAVHEYKL</sequence>
<dbReference type="EC" id="4.1.1.37" evidence="1"/>
<dbReference type="EMBL" id="CP000713">
    <property type="protein sequence ID" value="ABQ94540.1"/>
    <property type="molecule type" value="Genomic_DNA"/>
</dbReference>
<dbReference type="SMR" id="A5WFU9"/>
<dbReference type="STRING" id="349106.PsycPRwf_1599"/>
<dbReference type="KEGG" id="prw:PsycPRwf_1599"/>
<dbReference type="eggNOG" id="COG0407">
    <property type="taxonomic scope" value="Bacteria"/>
</dbReference>
<dbReference type="HOGENOM" id="CLU_040933_0_0_6"/>
<dbReference type="UniPathway" id="UPA00251">
    <property type="reaction ID" value="UER00321"/>
</dbReference>
<dbReference type="GO" id="GO:0005829">
    <property type="term" value="C:cytosol"/>
    <property type="evidence" value="ECO:0007669"/>
    <property type="project" value="TreeGrafter"/>
</dbReference>
<dbReference type="GO" id="GO:0004853">
    <property type="term" value="F:uroporphyrinogen decarboxylase activity"/>
    <property type="evidence" value="ECO:0007669"/>
    <property type="project" value="UniProtKB-UniRule"/>
</dbReference>
<dbReference type="GO" id="GO:0019353">
    <property type="term" value="P:protoporphyrinogen IX biosynthetic process from glutamate"/>
    <property type="evidence" value="ECO:0007669"/>
    <property type="project" value="TreeGrafter"/>
</dbReference>
<dbReference type="CDD" id="cd00717">
    <property type="entry name" value="URO-D"/>
    <property type="match status" value="1"/>
</dbReference>
<dbReference type="FunFam" id="3.20.20.210:FF:000001">
    <property type="entry name" value="Uroporphyrinogen decarboxylase"/>
    <property type="match status" value="1"/>
</dbReference>
<dbReference type="Gene3D" id="3.20.20.210">
    <property type="match status" value="1"/>
</dbReference>
<dbReference type="HAMAP" id="MF_00218">
    <property type="entry name" value="URO_D"/>
    <property type="match status" value="1"/>
</dbReference>
<dbReference type="InterPro" id="IPR038071">
    <property type="entry name" value="UROD/MetE-like_sf"/>
</dbReference>
<dbReference type="InterPro" id="IPR006361">
    <property type="entry name" value="Uroporphyrinogen_deCO2ase_HemE"/>
</dbReference>
<dbReference type="InterPro" id="IPR000257">
    <property type="entry name" value="Uroporphyrinogen_deCOase"/>
</dbReference>
<dbReference type="NCBIfam" id="TIGR01464">
    <property type="entry name" value="hemE"/>
    <property type="match status" value="1"/>
</dbReference>
<dbReference type="PANTHER" id="PTHR21091">
    <property type="entry name" value="METHYLTETRAHYDROFOLATE:HOMOCYSTEINE METHYLTRANSFERASE RELATED"/>
    <property type="match status" value="1"/>
</dbReference>
<dbReference type="PANTHER" id="PTHR21091:SF169">
    <property type="entry name" value="UROPORPHYRINOGEN DECARBOXYLASE"/>
    <property type="match status" value="1"/>
</dbReference>
<dbReference type="Pfam" id="PF01208">
    <property type="entry name" value="URO-D"/>
    <property type="match status" value="1"/>
</dbReference>
<dbReference type="SUPFAM" id="SSF51726">
    <property type="entry name" value="UROD/MetE-like"/>
    <property type="match status" value="1"/>
</dbReference>
<dbReference type="PROSITE" id="PS00906">
    <property type="entry name" value="UROD_1"/>
    <property type="match status" value="1"/>
</dbReference>
<dbReference type="PROSITE" id="PS00907">
    <property type="entry name" value="UROD_2"/>
    <property type="match status" value="1"/>
</dbReference>
<proteinExistence type="inferred from homology"/>
<comment type="function">
    <text evidence="1">Catalyzes the decarboxylation of four acetate groups of uroporphyrinogen-III to yield coproporphyrinogen-III.</text>
</comment>
<comment type="catalytic activity">
    <reaction evidence="1">
        <text>uroporphyrinogen III + 4 H(+) = coproporphyrinogen III + 4 CO2</text>
        <dbReference type="Rhea" id="RHEA:19865"/>
        <dbReference type="ChEBI" id="CHEBI:15378"/>
        <dbReference type="ChEBI" id="CHEBI:16526"/>
        <dbReference type="ChEBI" id="CHEBI:57308"/>
        <dbReference type="ChEBI" id="CHEBI:57309"/>
        <dbReference type="EC" id="4.1.1.37"/>
    </reaction>
</comment>
<comment type="pathway">
    <text evidence="1">Porphyrin-containing compound metabolism; protoporphyrin-IX biosynthesis; coproporphyrinogen-III from 5-aminolevulinate: step 4/4.</text>
</comment>
<comment type="subunit">
    <text evidence="1">Homodimer.</text>
</comment>
<comment type="subcellular location">
    <subcellularLocation>
        <location evidence="1">Cytoplasm</location>
    </subcellularLocation>
</comment>
<comment type="similarity">
    <text evidence="1">Belongs to the uroporphyrinogen decarboxylase family.</text>
</comment>
<keyword id="KW-0963">Cytoplasm</keyword>
<keyword id="KW-0210">Decarboxylase</keyword>
<keyword id="KW-0456">Lyase</keyword>
<keyword id="KW-0627">Porphyrin biosynthesis</keyword>
<name>DCUP_PSYWF</name>